<name>YI002_YEAST</name>
<sequence length="69" mass="7729">MTRDTPEDVSTAGAKDILDVLNLLKGGEEKISEVELKLDEMEKKMDSLLVQLEDLHRDNNDLAKSSSQK</sequence>
<gene>
    <name type="ordered locus">YIL002W-A</name>
</gene>
<keyword id="KW-0175">Coiled coil</keyword>
<keyword id="KW-1185">Reference proteome</keyword>
<reference key="1">
    <citation type="journal article" date="1997" name="Nature">
        <title>The nucleotide sequence of Saccharomyces cerevisiae chromosome IX.</title>
        <authorList>
            <person name="Churcher C.M."/>
            <person name="Bowman S."/>
            <person name="Badcock K."/>
            <person name="Bankier A.T."/>
            <person name="Brown D."/>
            <person name="Chillingworth T."/>
            <person name="Connor R."/>
            <person name="Devlin K."/>
            <person name="Gentles S."/>
            <person name="Hamlin N."/>
            <person name="Harris D.E."/>
            <person name="Horsnell T."/>
            <person name="Hunt S."/>
            <person name="Jagels K."/>
            <person name="Jones M."/>
            <person name="Lye G."/>
            <person name="Moule S."/>
            <person name="Odell C."/>
            <person name="Pearson D."/>
            <person name="Rajandream M.A."/>
            <person name="Rice P."/>
            <person name="Rowley N."/>
            <person name="Skelton J."/>
            <person name="Smith V."/>
            <person name="Walsh S.V."/>
            <person name="Whitehead S."/>
            <person name="Barrell B.G."/>
        </authorList>
    </citation>
    <scope>NUCLEOTIDE SEQUENCE [LARGE SCALE GENOMIC DNA]</scope>
    <source>
        <strain>ATCC 204508 / S288c</strain>
    </source>
</reference>
<reference key="2">
    <citation type="journal article" date="2014" name="G3 (Bethesda)">
        <title>The reference genome sequence of Saccharomyces cerevisiae: Then and now.</title>
        <authorList>
            <person name="Engel S.R."/>
            <person name="Dietrich F.S."/>
            <person name="Fisk D.G."/>
            <person name="Binkley G."/>
            <person name="Balakrishnan R."/>
            <person name="Costanzo M.C."/>
            <person name="Dwight S.S."/>
            <person name="Hitz B.C."/>
            <person name="Karra K."/>
            <person name="Nash R.S."/>
            <person name="Weng S."/>
            <person name="Wong E.D."/>
            <person name="Lloyd P."/>
            <person name="Skrzypek M.S."/>
            <person name="Miyasato S.R."/>
            <person name="Simison M."/>
            <person name="Cherry J.M."/>
        </authorList>
    </citation>
    <scope>GENOME REANNOTATION</scope>
    <source>
        <strain>ATCC 204508 / S288c</strain>
    </source>
</reference>
<reference key="3">
    <citation type="journal article" date="2002" name="Genome Res.">
        <title>Parallel identification of new genes in Saccharomyces cerevisiae.</title>
        <authorList>
            <person name="Oshiro G."/>
            <person name="Wodicka L.M."/>
            <person name="Washburn M.P."/>
            <person name="Yates J.R. III"/>
            <person name="Lockhart D.J."/>
            <person name="Winzeler E.A."/>
        </authorList>
    </citation>
    <scope>IDENTIFICATION BY MASS SPECTROMETRY</scope>
</reference>
<reference key="4">
    <citation type="journal article" date="2008" name="Mol. Cell. Proteomics">
        <title>A multidimensional chromatography technology for in-depth phosphoproteome analysis.</title>
        <authorList>
            <person name="Albuquerque C.P."/>
            <person name="Smolka M.B."/>
            <person name="Payne S.H."/>
            <person name="Bafna V."/>
            <person name="Eng J."/>
            <person name="Zhou H."/>
        </authorList>
    </citation>
    <scope>IDENTIFICATION BY MASS SPECTROMETRY [LARGE SCALE ANALYSIS]</scope>
</reference>
<feature type="chain" id="PRO_0000245405" description="Uncharacterized protein YIL002W-A">
    <location>
        <begin position="1"/>
        <end position="69"/>
    </location>
</feature>
<feature type="coiled-coil region" evidence="1">
    <location>
        <begin position="21"/>
        <end position="64"/>
    </location>
</feature>
<proteinExistence type="evidence at protein level"/>
<dbReference type="EMBL" id="Z38062">
    <property type="status" value="NOT_ANNOTATED_CDS"/>
    <property type="molecule type" value="Genomic_DNA"/>
</dbReference>
<dbReference type="EMBL" id="BK006942">
    <property type="protein sequence ID" value="DAA08544.1"/>
    <property type="molecule type" value="Genomic_DNA"/>
</dbReference>
<dbReference type="SMR" id="Q3E7Z5"/>
<dbReference type="BioGRID" id="37035">
    <property type="interactions" value="59"/>
</dbReference>
<dbReference type="FunCoup" id="Q3E7Z5">
    <property type="interactions" value="8"/>
</dbReference>
<dbReference type="IntAct" id="Q3E7Z5">
    <property type="interactions" value="2"/>
</dbReference>
<dbReference type="STRING" id="4932.YIL002W-A"/>
<dbReference type="iPTMnet" id="Q3E7Z5"/>
<dbReference type="PaxDb" id="4932-YIL002W-A"/>
<dbReference type="PeptideAtlas" id="Q3E7Z5"/>
<dbReference type="EnsemblFungi" id="YIL002W-A_mRNA">
    <property type="protein sequence ID" value="YIL002W-A"/>
    <property type="gene ID" value="YIL002W-A"/>
</dbReference>
<dbReference type="KEGG" id="sce:YIL002W-A"/>
<dbReference type="AGR" id="SGD:S000028835"/>
<dbReference type="SGD" id="S000028835">
    <property type="gene designation" value="YIL002W-A"/>
</dbReference>
<dbReference type="VEuPathDB" id="FungiDB:YIL002W-A"/>
<dbReference type="HOGENOM" id="CLU_2813857_0_0_1"/>
<dbReference type="InParanoid" id="Q3E7Z5"/>
<dbReference type="OrthoDB" id="4050034at2759"/>
<dbReference type="BioCyc" id="YEAST:G3O-31473-MONOMER"/>
<dbReference type="BioGRID-ORCS" id="1466493">
    <property type="hits" value="0 hits in 10 CRISPR screens"/>
</dbReference>
<dbReference type="PRO" id="PR:Q3E7Z5"/>
<dbReference type="Proteomes" id="UP000002311">
    <property type="component" value="Chromosome IX"/>
</dbReference>
<dbReference type="RNAct" id="Q3E7Z5">
    <property type="molecule type" value="protein"/>
</dbReference>
<accession>Q3E7Z5</accession>
<accession>D6VVS8</accession>
<organism>
    <name type="scientific">Saccharomyces cerevisiae (strain ATCC 204508 / S288c)</name>
    <name type="common">Baker's yeast</name>
    <dbReference type="NCBI Taxonomy" id="559292"/>
    <lineage>
        <taxon>Eukaryota</taxon>
        <taxon>Fungi</taxon>
        <taxon>Dikarya</taxon>
        <taxon>Ascomycota</taxon>
        <taxon>Saccharomycotina</taxon>
        <taxon>Saccharomycetes</taxon>
        <taxon>Saccharomycetales</taxon>
        <taxon>Saccharomycetaceae</taxon>
        <taxon>Saccharomyces</taxon>
    </lineage>
</organism>
<protein>
    <recommendedName>
        <fullName>Uncharacterized protein YIL002W-A</fullName>
    </recommendedName>
</protein>
<evidence type="ECO:0000255" key="1"/>